<keyword id="KW-0143">Chaperone</keyword>
<keyword id="KW-0963">Cytoplasm</keyword>
<keyword id="KW-1185">Reference proteome</keyword>
<reference key="1">
    <citation type="journal article" date="2007" name="PLoS Genet.">
        <title>Patterns and implications of gene gain and loss in the evolution of Prochlorococcus.</title>
        <authorList>
            <person name="Kettler G.C."/>
            <person name="Martiny A.C."/>
            <person name="Huang K."/>
            <person name="Zucker J."/>
            <person name="Coleman M.L."/>
            <person name="Rodrigue S."/>
            <person name="Chen F."/>
            <person name="Lapidus A."/>
            <person name="Ferriera S."/>
            <person name="Johnson J."/>
            <person name="Steglich C."/>
            <person name="Church G.M."/>
            <person name="Richardson P."/>
            <person name="Chisholm S.W."/>
        </authorList>
    </citation>
    <scope>NUCLEOTIDE SEQUENCE [LARGE SCALE GENOMIC DNA]</scope>
    <source>
        <strain>MIT 9211</strain>
    </source>
</reference>
<accession>A9BCC5</accession>
<name>CH10_PROM4</name>
<protein>
    <recommendedName>
        <fullName evidence="1">Co-chaperonin GroES</fullName>
    </recommendedName>
    <alternativeName>
        <fullName evidence="1">10 kDa chaperonin</fullName>
    </alternativeName>
    <alternativeName>
        <fullName evidence="1">Chaperonin-10</fullName>
        <shortName evidence="1">Cpn10</shortName>
    </alternativeName>
</protein>
<sequence length="103" mass="10831">MAAVSLSVSTVKPLGDRVFVKVSESEEKTAGGILLPDTAKEKPQVGEVAQVGPGKRNEDGSRQAPEVGVGDKVLYSKYAGTDIKLGSDEYVLLSEKDILAVVN</sequence>
<evidence type="ECO:0000255" key="1">
    <source>
        <dbReference type="HAMAP-Rule" id="MF_00580"/>
    </source>
</evidence>
<gene>
    <name evidence="1" type="primary">groES</name>
    <name evidence="1" type="synonym">groS</name>
    <name type="ordered locus">P9211_15561</name>
</gene>
<comment type="function">
    <text evidence="1">Together with the chaperonin GroEL, plays an essential role in assisting protein folding. The GroEL-GroES system forms a nano-cage that allows encapsulation of the non-native substrate proteins and provides a physical environment optimized to promote and accelerate protein folding. GroES binds to the apical surface of the GroEL ring, thereby capping the opening of the GroEL channel.</text>
</comment>
<comment type="subunit">
    <text evidence="1">Heptamer of 7 subunits arranged in a ring. Interacts with the chaperonin GroEL.</text>
</comment>
<comment type="subcellular location">
    <subcellularLocation>
        <location evidence="1">Cytoplasm</location>
    </subcellularLocation>
</comment>
<comment type="similarity">
    <text evidence="1">Belongs to the GroES chaperonin family.</text>
</comment>
<organism>
    <name type="scientific">Prochlorococcus marinus (strain MIT 9211)</name>
    <dbReference type="NCBI Taxonomy" id="93059"/>
    <lineage>
        <taxon>Bacteria</taxon>
        <taxon>Bacillati</taxon>
        <taxon>Cyanobacteriota</taxon>
        <taxon>Cyanophyceae</taxon>
        <taxon>Synechococcales</taxon>
        <taxon>Prochlorococcaceae</taxon>
        <taxon>Prochlorococcus</taxon>
    </lineage>
</organism>
<proteinExistence type="inferred from homology"/>
<dbReference type="EMBL" id="CP000878">
    <property type="protein sequence ID" value="ABX09487.1"/>
    <property type="molecule type" value="Genomic_DNA"/>
</dbReference>
<dbReference type="RefSeq" id="WP_012196108.1">
    <property type="nucleotide sequence ID" value="NC_009976.1"/>
</dbReference>
<dbReference type="SMR" id="A9BCC5"/>
<dbReference type="STRING" id="93059.P9211_15561"/>
<dbReference type="KEGG" id="pmj:P9211_15561"/>
<dbReference type="eggNOG" id="COG0234">
    <property type="taxonomic scope" value="Bacteria"/>
</dbReference>
<dbReference type="HOGENOM" id="CLU_132825_2_1_3"/>
<dbReference type="OrthoDB" id="9806791at2"/>
<dbReference type="Proteomes" id="UP000000788">
    <property type="component" value="Chromosome"/>
</dbReference>
<dbReference type="GO" id="GO:0005737">
    <property type="term" value="C:cytoplasm"/>
    <property type="evidence" value="ECO:0007669"/>
    <property type="project" value="UniProtKB-SubCell"/>
</dbReference>
<dbReference type="GO" id="GO:0005524">
    <property type="term" value="F:ATP binding"/>
    <property type="evidence" value="ECO:0007669"/>
    <property type="project" value="InterPro"/>
</dbReference>
<dbReference type="GO" id="GO:0046872">
    <property type="term" value="F:metal ion binding"/>
    <property type="evidence" value="ECO:0007669"/>
    <property type="project" value="TreeGrafter"/>
</dbReference>
<dbReference type="GO" id="GO:0044183">
    <property type="term" value="F:protein folding chaperone"/>
    <property type="evidence" value="ECO:0007669"/>
    <property type="project" value="InterPro"/>
</dbReference>
<dbReference type="GO" id="GO:0051087">
    <property type="term" value="F:protein-folding chaperone binding"/>
    <property type="evidence" value="ECO:0007669"/>
    <property type="project" value="TreeGrafter"/>
</dbReference>
<dbReference type="GO" id="GO:0051082">
    <property type="term" value="F:unfolded protein binding"/>
    <property type="evidence" value="ECO:0007669"/>
    <property type="project" value="TreeGrafter"/>
</dbReference>
<dbReference type="GO" id="GO:0051085">
    <property type="term" value="P:chaperone cofactor-dependent protein refolding"/>
    <property type="evidence" value="ECO:0007669"/>
    <property type="project" value="TreeGrafter"/>
</dbReference>
<dbReference type="CDD" id="cd00320">
    <property type="entry name" value="cpn10"/>
    <property type="match status" value="1"/>
</dbReference>
<dbReference type="FunFam" id="2.30.33.40:FF:000001">
    <property type="entry name" value="10 kDa chaperonin"/>
    <property type="match status" value="1"/>
</dbReference>
<dbReference type="Gene3D" id="2.30.33.40">
    <property type="entry name" value="GroES chaperonin"/>
    <property type="match status" value="1"/>
</dbReference>
<dbReference type="HAMAP" id="MF_00580">
    <property type="entry name" value="CH10"/>
    <property type="match status" value="1"/>
</dbReference>
<dbReference type="InterPro" id="IPR020818">
    <property type="entry name" value="Chaperonin_GroES"/>
</dbReference>
<dbReference type="InterPro" id="IPR037124">
    <property type="entry name" value="Chaperonin_GroES_sf"/>
</dbReference>
<dbReference type="InterPro" id="IPR018369">
    <property type="entry name" value="Chaprnonin_Cpn10_CS"/>
</dbReference>
<dbReference type="InterPro" id="IPR011032">
    <property type="entry name" value="GroES-like_sf"/>
</dbReference>
<dbReference type="NCBIfam" id="NF001530">
    <property type="entry name" value="PRK00364.1-6"/>
    <property type="match status" value="1"/>
</dbReference>
<dbReference type="NCBIfam" id="NF001531">
    <property type="entry name" value="PRK00364.2-2"/>
    <property type="match status" value="1"/>
</dbReference>
<dbReference type="NCBIfam" id="NF001533">
    <property type="entry name" value="PRK00364.2-4"/>
    <property type="match status" value="1"/>
</dbReference>
<dbReference type="NCBIfam" id="NF001534">
    <property type="entry name" value="PRK00364.2-5"/>
    <property type="match status" value="1"/>
</dbReference>
<dbReference type="PANTHER" id="PTHR10772">
    <property type="entry name" value="10 KDA HEAT SHOCK PROTEIN"/>
    <property type="match status" value="1"/>
</dbReference>
<dbReference type="PANTHER" id="PTHR10772:SF58">
    <property type="entry name" value="CO-CHAPERONIN GROES"/>
    <property type="match status" value="1"/>
</dbReference>
<dbReference type="Pfam" id="PF00166">
    <property type="entry name" value="Cpn10"/>
    <property type="match status" value="1"/>
</dbReference>
<dbReference type="PRINTS" id="PR00297">
    <property type="entry name" value="CHAPERONIN10"/>
</dbReference>
<dbReference type="SMART" id="SM00883">
    <property type="entry name" value="Cpn10"/>
    <property type="match status" value="1"/>
</dbReference>
<dbReference type="SUPFAM" id="SSF50129">
    <property type="entry name" value="GroES-like"/>
    <property type="match status" value="1"/>
</dbReference>
<dbReference type="PROSITE" id="PS00681">
    <property type="entry name" value="CHAPERONINS_CPN10"/>
    <property type="match status" value="1"/>
</dbReference>
<feature type="chain" id="PRO_1000129692" description="Co-chaperonin GroES">
    <location>
        <begin position="1"/>
        <end position="103"/>
    </location>
</feature>